<feature type="chain" id="PRO_0000439864" description="Phytochrome-interacting ankyrin-repeat protein 1">
    <location>
        <begin position="1"/>
        <end position="175"/>
    </location>
</feature>
<feature type="chain" id="PRO_0000439865" description="Protein ANK6-like, mitochondrial" evidence="2">
    <location>
        <begin position="29"/>
        <end position="175"/>
    </location>
</feature>
<feature type="repeat" description="ANK 1" evidence="2">
    <location>
        <begin position="30"/>
        <end position="59"/>
    </location>
</feature>
<feature type="repeat" description="ANK 2" evidence="2">
    <location>
        <begin position="67"/>
        <end position="96"/>
    </location>
</feature>
<feature type="repeat" description="ANK 3" evidence="2">
    <location>
        <begin position="102"/>
        <end position="131"/>
    </location>
</feature>
<dbReference type="EMBL" id="AB005249">
    <property type="protein sequence ID" value="BAB09948.1"/>
    <property type="molecule type" value="Genomic_DNA"/>
</dbReference>
<dbReference type="EMBL" id="AL133421">
    <property type="protein sequence ID" value="CAB62596.1"/>
    <property type="status" value="ALT_SEQ"/>
    <property type="molecule type" value="Genomic_DNA"/>
</dbReference>
<dbReference type="EMBL" id="CP002688">
    <property type="protein sequence ID" value="AED91211.1"/>
    <property type="molecule type" value="Genomic_DNA"/>
</dbReference>
<dbReference type="EMBL" id="AF428380">
    <property type="protein sequence ID" value="AAL16148.1"/>
    <property type="molecule type" value="mRNA"/>
</dbReference>
<dbReference type="EMBL" id="AY125541">
    <property type="protein sequence ID" value="AAM78051.1"/>
    <property type="molecule type" value="mRNA"/>
</dbReference>
<dbReference type="EMBL" id="AK227033">
    <property type="protein sequence ID" value="BAE99094.1"/>
    <property type="molecule type" value="mRNA"/>
</dbReference>
<dbReference type="PIR" id="T45609">
    <property type="entry name" value="T45609"/>
</dbReference>
<dbReference type="RefSeq" id="NP_568184.1">
    <property type="nucleotide sequence ID" value="NM_120866.1"/>
</dbReference>
<dbReference type="SMR" id="Q9FF09"/>
<dbReference type="FunCoup" id="Q9FF09">
    <property type="interactions" value="220"/>
</dbReference>
<dbReference type="IntAct" id="Q9FF09">
    <property type="interactions" value="7"/>
</dbReference>
<dbReference type="STRING" id="3702.Q9FF09"/>
<dbReference type="PaxDb" id="3702-AT5G07840.1"/>
<dbReference type="EnsemblPlants" id="AT5G07840.1">
    <property type="protein sequence ID" value="AT5G07840.1"/>
    <property type="gene ID" value="AT5G07840"/>
</dbReference>
<dbReference type="GeneID" id="830677"/>
<dbReference type="Gramene" id="AT5G07840.1">
    <property type="protein sequence ID" value="AT5G07840.1"/>
    <property type="gene ID" value="AT5G07840"/>
</dbReference>
<dbReference type="KEGG" id="ath:AT5G07840"/>
<dbReference type="Araport" id="AT5G07840"/>
<dbReference type="TAIR" id="AT5G07840">
    <property type="gene designation" value="PIA1"/>
</dbReference>
<dbReference type="eggNOG" id="KOG0504">
    <property type="taxonomic scope" value="Eukaryota"/>
</dbReference>
<dbReference type="HOGENOM" id="CLU_000134_45_8_1"/>
<dbReference type="InParanoid" id="Q9FF09"/>
<dbReference type="OMA" id="GPKSKGM"/>
<dbReference type="OrthoDB" id="194358at2759"/>
<dbReference type="PRO" id="PR:Q9FF09"/>
<dbReference type="Proteomes" id="UP000006548">
    <property type="component" value="Chromosome 5"/>
</dbReference>
<dbReference type="ExpressionAtlas" id="Q9FF09">
    <property type="expression patterns" value="baseline and differential"/>
</dbReference>
<dbReference type="GO" id="GO:0005737">
    <property type="term" value="C:cytoplasm"/>
    <property type="evidence" value="ECO:0000250"/>
    <property type="project" value="UniProtKB"/>
</dbReference>
<dbReference type="GO" id="GO:0005739">
    <property type="term" value="C:mitochondrion"/>
    <property type="evidence" value="ECO:0007669"/>
    <property type="project" value="UniProtKB-SubCell"/>
</dbReference>
<dbReference type="GO" id="GO:0005634">
    <property type="term" value="C:nucleus"/>
    <property type="evidence" value="ECO:0000250"/>
    <property type="project" value="UniProtKB"/>
</dbReference>
<dbReference type="GO" id="GO:0010313">
    <property type="term" value="F:phytochrome binding"/>
    <property type="evidence" value="ECO:0000250"/>
    <property type="project" value="UniProtKB"/>
</dbReference>
<dbReference type="Gene3D" id="1.25.40.20">
    <property type="entry name" value="Ankyrin repeat-containing domain"/>
    <property type="match status" value="1"/>
</dbReference>
<dbReference type="InterPro" id="IPR002110">
    <property type="entry name" value="Ankyrin_rpt"/>
</dbReference>
<dbReference type="InterPro" id="IPR036770">
    <property type="entry name" value="Ankyrin_rpt-contain_sf"/>
</dbReference>
<dbReference type="PANTHER" id="PTHR24171">
    <property type="entry name" value="ANKYRIN REPEAT DOMAIN-CONTAINING PROTEIN 39-RELATED"/>
    <property type="match status" value="1"/>
</dbReference>
<dbReference type="PANTHER" id="PTHR24171:SF8">
    <property type="entry name" value="BRCA1-ASSOCIATED RING DOMAIN PROTEIN 1"/>
    <property type="match status" value="1"/>
</dbReference>
<dbReference type="Pfam" id="PF12796">
    <property type="entry name" value="Ank_2"/>
    <property type="match status" value="1"/>
</dbReference>
<dbReference type="PRINTS" id="PR01415">
    <property type="entry name" value="ANKYRIN"/>
</dbReference>
<dbReference type="SMART" id="SM00248">
    <property type="entry name" value="ANK"/>
    <property type="match status" value="3"/>
</dbReference>
<dbReference type="SUPFAM" id="SSF48403">
    <property type="entry name" value="Ankyrin repeat"/>
    <property type="match status" value="1"/>
</dbReference>
<dbReference type="PROSITE" id="PS50297">
    <property type="entry name" value="ANK_REP_REGION"/>
    <property type="match status" value="1"/>
</dbReference>
<dbReference type="PROSITE" id="PS50088">
    <property type="entry name" value="ANK_REPEAT"/>
    <property type="match status" value="3"/>
</dbReference>
<protein>
    <recommendedName>
        <fullName evidence="4">Phytochrome-interacting ankyrin-repeat protein 1</fullName>
    </recommendedName>
    <component>
        <recommendedName>
            <fullName evidence="5">Protein ANK6-like, mitochondrial</fullName>
        </recommendedName>
    </component>
</protein>
<name>PIA1_ARATH</name>
<accession>Q9FF09</accession>
<accession>Q9SDA0</accession>
<evidence type="ECO:0000250" key="1">
    <source>
        <dbReference type="UniProtKB" id="Q9FNP4"/>
    </source>
</evidence>
<evidence type="ECO:0000255" key="2"/>
<evidence type="ECO:0000269" key="3">
    <source>
    </source>
</evidence>
<evidence type="ECO:0000303" key="4">
    <source>
    </source>
</evidence>
<evidence type="ECO:0000305" key="5"/>
<evidence type="ECO:0000312" key="6">
    <source>
        <dbReference type="Araport" id="AT5G07840"/>
    </source>
</evidence>
<evidence type="ECO:0000312" key="7">
    <source>
        <dbReference type="EMBL" id="BAB09948.1"/>
    </source>
</evidence>
<evidence type="ECO:0000312" key="8">
    <source>
        <dbReference type="EMBL" id="CAB62596.1"/>
    </source>
</evidence>
<proteinExistence type="evidence at transcript level"/>
<sequence length="175" mass="19257">MLQEQPVALSFRPNSFRRRSMETGVDRDDRGWTQLHIKAREGDLKAVKELLDQGADVNALACGPKSKGMTPLHLAAKGGHIEVMDLLLERGANMEARTSGACGWTPLHAAAKERKREAVKFLVGNGAFLPDDITDSRFNPPVQYCHGLEWAYEERKKLSEDTSLSCGDTSCSSAN</sequence>
<organism>
    <name type="scientific">Arabidopsis thaliana</name>
    <name type="common">Mouse-ear cress</name>
    <dbReference type="NCBI Taxonomy" id="3702"/>
    <lineage>
        <taxon>Eukaryota</taxon>
        <taxon>Viridiplantae</taxon>
        <taxon>Streptophyta</taxon>
        <taxon>Embryophyta</taxon>
        <taxon>Tracheophyta</taxon>
        <taxon>Spermatophyta</taxon>
        <taxon>Magnoliopsida</taxon>
        <taxon>eudicotyledons</taxon>
        <taxon>Gunneridae</taxon>
        <taxon>Pentapetalae</taxon>
        <taxon>rosids</taxon>
        <taxon>malvids</taxon>
        <taxon>Brassicales</taxon>
        <taxon>Brassicaceae</taxon>
        <taxon>Camelineae</taxon>
        <taxon>Arabidopsis</taxon>
    </lineage>
</organism>
<reference key="1">
    <citation type="journal article" date="1997" name="DNA Res.">
        <title>Structural analysis of Arabidopsis thaliana chromosome 5. I. Sequence features of the 1.6 Mb regions covered by twenty physically assigned P1 clones.</title>
        <authorList>
            <person name="Sato S."/>
            <person name="Kotani H."/>
            <person name="Nakamura Y."/>
            <person name="Kaneko T."/>
            <person name="Asamizu E."/>
            <person name="Fukami M."/>
            <person name="Miyajima N."/>
            <person name="Tabata S."/>
        </authorList>
    </citation>
    <scope>NUCLEOTIDE SEQUENCE [LARGE SCALE GENOMIC DNA]</scope>
    <source>
        <strain>cv. Columbia</strain>
    </source>
</reference>
<reference key="2">
    <citation type="journal article" date="2000" name="Nature">
        <title>Sequence and analysis of chromosome 5 of the plant Arabidopsis thaliana.</title>
        <authorList>
            <person name="Tabata S."/>
            <person name="Kaneko T."/>
            <person name="Nakamura Y."/>
            <person name="Kotani H."/>
            <person name="Kato T."/>
            <person name="Asamizu E."/>
            <person name="Miyajima N."/>
            <person name="Sasamoto S."/>
            <person name="Kimura T."/>
            <person name="Hosouchi T."/>
            <person name="Kawashima K."/>
            <person name="Kohara M."/>
            <person name="Matsumoto M."/>
            <person name="Matsuno A."/>
            <person name="Muraki A."/>
            <person name="Nakayama S."/>
            <person name="Nakazaki N."/>
            <person name="Naruo K."/>
            <person name="Okumura S."/>
            <person name="Shinpo S."/>
            <person name="Takeuchi C."/>
            <person name="Wada T."/>
            <person name="Watanabe A."/>
            <person name="Yamada M."/>
            <person name="Yasuda M."/>
            <person name="Sato S."/>
            <person name="de la Bastide M."/>
            <person name="Huang E."/>
            <person name="Spiegel L."/>
            <person name="Gnoj L."/>
            <person name="O'Shaughnessy A."/>
            <person name="Preston R."/>
            <person name="Habermann K."/>
            <person name="Murray J."/>
            <person name="Johnson D."/>
            <person name="Rohlfing T."/>
            <person name="Nelson J."/>
            <person name="Stoneking T."/>
            <person name="Pepin K."/>
            <person name="Spieth J."/>
            <person name="Sekhon M."/>
            <person name="Armstrong J."/>
            <person name="Becker M."/>
            <person name="Belter E."/>
            <person name="Cordum H."/>
            <person name="Cordes M."/>
            <person name="Courtney L."/>
            <person name="Courtney W."/>
            <person name="Dante M."/>
            <person name="Du H."/>
            <person name="Edwards J."/>
            <person name="Fryman J."/>
            <person name="Haakensen B."/>
            <person name="Lamar E."/>
            <person name="Latreille P."/>
            <person name="Leonard S."/>
            <person name="Meyer R."/>
            <person name="Mulvaney E."/>
            <person name="Ozersky P."/>
            <person name="Riley A."/>
            <person name="Strowmatt C."/>
            <person name="Wagner-McPherson C."/>
            <person name="Wollam A."/>
            <person name="Yoakum M."/>
            <person name="Bell M."/>
            <person name="Dedhia N."/>
            <person name="Parnell L."/>
            <person name="Shah R."/>
            <person name="Rodriguez M."/>
            <person name="Hoon See L."/>
            <person name="Vil D."/>
            <person name="Baker J."/>
            <person name="Kirchoff K."/>
            <person name="Toth K."/>
            <person name="King L."/>
            <person name="Bahret A."/>
            <person name="Miller B."/>
            <person name="Marra M.A."/>
            <person name="Martienssen R."/>
            <person name="McCombie W.R."/>
            <person name="Wilson R.K."/>
            <person name="Murphy G."/>
            <person name="Bancroft I."/>
            <person name="Volckaert G."/>
            <person name="Wambutt R."/>
            <person name="Duesterhoeft A."/>
            <person name="Stiekema W."/>
            <person name="Pohl T."/>
            <person name="Entian K.-D."/>
            <person name="Terryn N."/>
            <person name="Hartley N."/>
            <person name="Bent E."/>
            <person name="Johnson S."/>
            <person name="Langham S.-A."/>
            <person name="McCullagh B."/>
            <person name="Robben J."/>
            <person name="Grymonprez B."/>
            <person name="Zimmermann W."/>
            <person name="Ramsperger U."/>
            <person name="Wedler H."/>
            <person name="Balke K."/>
            <person name="Wedler E."/>
            <person name="Peters S."/>
            <person name="van Staveren M."/>
            <person name="Dirkse W."/>
            <person name="Mooijman P."/>
            <person name="Klein Lankhorst R."/>
            <person name="Weitzenegger T."/>
            <person name="Bothe G."/>
            <person name="Rose M."/>
            <person name="Hauf J."/>
            <person name="Berneiser S."/>
            <person name="Hempel S."/>
            <person name="Feldpausch M."/>
            <person name="Lamberth S."/>
            <person name="Villarroel R."/>
            <person name="Gielen J."/>
            <person name="Ardiles W."/>
            <person name="Bents O."/>
            <person name="Lemcke K."/>
            <person name="Kolesov G."/>
            <person name="Mayer K.F.X."/>
            <person name="Rudd S."/>
            <person name="Schoof H."/>
            <person name="Schueller C."/>
            <person name="Zaccaria P."/>
            <person name="Mewes H.-W."/>
            <person name="Bevan M."/>
            <person name="Fransz P.F."/>
        </authorList>
    </citation>
    <scope>NUCLEOTIDE SEQUENCE [LARGE SCALE GENOMIC DNA]</scope>
    <source>
        <strain>cv. Columbia</strain>
    </source>
</reference>
<reference key="3">
    <citation type="journal article" date="2017" name="Plant J.">
        <title>Araport11: a complete reannotation of the Arabidopsis thaliana reference genome.</title>
        <authorList>
            <person name="Cheng C.Y."/>
            <person name="Krishnakumar V."/>
            <person name="Chan A.P."/>
            <person name="Thibaud-Nissen F."/>
            <person name="Schobel S."/>
            <person name="Town C.D."/>
        </authorList>
    </citation>
    <scope>GENOME REANNOTATION</scope>
    <source>
        <strain>cv. Columbia</strain>
    </source>
</reference>
<reference key="4">
    <citation type="journal article" date="2003" name="Science">
        <title>Empirical analysis of transcriptional activity in the Arabidopsis genome.</title>
        <authorList>
            <person name="Yamada K."/>
            <person name="Lim J."/>
            <person name="Dale J.M."/>
            <person name="Chen H."/>
            <person name="Shinn P."/>
            <person name="Palm C.J."/>
            <person name="Southwick A.M."/>
            <person name="Wu H.C."/>
            <person name="Kim C.J."/>
            <person name="Nguyen M."/>
            <person name="Pham P.K."/>
            <person name="Cheuk R.F."/>
            <person name="Karlin-Newmann G."/>
            <person name="Liu S.X."/>
            <person name="Lam B."/>
            <person name="Sakano H."/>
            <person name="Wu T."/>
            <person name="Yu G."/>
            <person name="Miranda M."/>
            <person name="Quach H.L."/>
            <person name="Tripp M."/>
            <person name="Chang C.H."/>
            <person name="Lee J.M."/>
            <person name="Toriumi M.J."/>
            <person name="Chan M.M."/>
            <person name="Tang C.C."/>
            <person name="Onodera C.S."/>
            <person name="Deng J.M."/>
            <person name="Akiyama K."/>
            <person name="Ansari Y."/>
            <person name="Arakawa T."/>
            <person name="Banh J."/>
            <person name="Banno F."/>
            <person name="Bowser L."/>
            <person name="Brooks S.Y."/>
            <person name="Carninci P."/>
            <person name="Chao Q."/>
            <person name="Choy N."/>
            <person name="Enju A."/>
            <person name="Goldsmith A.D."/>
            <person name="Gurjal M."/>
            <person name="Hansen N.F."/>
            <person name="Hayashizaki Y."/>
            <person name="Johnson-Hopson C."/>
            <person name="Hsuan V.W."/>
            <person name="Iida K."/>
            <person name="Karnes M."/>
            <person name="Khan S."/>
            <person name="Koesema E."/>
            <person name="Ishida J."/>
            <person name="Jiang P.X."/>
            <person name="Jones T."/>
            <person name="Kawai J."/>
            <person name="Kamiya A."/>
            <person name="Meyers C."/>
            <person name="Nakajima M."/>
            <person name="Narusaka M."/>
            <person name="Seki M."/>
            <person name="Sakurai T."/>
            <person name="Satou M."/>
            <person name="Tamse R."/>
            <person name="Vaysberg M."/>
            <person name="Wallender E.K."/>
            <person name="Wong C."/>
            <person name="Yamamura Y."/>
            <person name="Yuan S."/>
            <person name="Shinozaki K."/>
            <person name="Davis R.W."/>
            <person name="Theologis A."/>
            <person name="Ecker J.R."/>
        </authorList>
    </citation>
    <scope>NUCLEOTIDE SEQUENCE [LARGE SCALE MRNA]</scope>
    <source>
        <strain>cv. Columbia</strain>
    </source>
</reference>
<reference key="5">
    <citation type="submission" date="2006-07" db="EMBL/GenBank/DDBJ databases">
        <title>Large-scale analysis of RIKEN Arabidopsis full-length (RAFL) cDNAs.</title>
        <authorList>
            <person name="Totoki Y."/>
            <person name="Seki M."/>
            <person name="Ishida J."/>
            <person name="Nakajima M."/>
            <person name="Enju A."/>
            <person name="Kamiya A."/>
            <person name="Narusaka M."/>
            <person name="Shin-i T."/>
            <person name="Nakagawa M."/>
            <person name="Sakamoto N."/>
            <person name="Oishi K."/>
            <person name="Kohara Y."/>
            <person name="Kobayashi M."/>
            <person name="Toyoda A."/>
            <person name="Sakaki Y."/>
            <person name="Sakurai T."/>
            <person name="Iida K."/>
            <person name="Akiyama K."/>
            <person name="Satou M."/>
            <person name="Toyoda T."/>
            <person name="Konagaya A."/>
            <person name="Carninci P."/>
            <person name="Kawai J."/>
            <person name="Hayashizaki Y."/>
            <person name="Shinozaki K."/>
        </authorList>
    </citation>
    <scope>NUCLEOTIDE SEQUENCE [LARGE SCALE MRNA]</scope>
    <source>
        <strain>cv. Columbia</strain>
    </source>
</reference>
<reference key="6">
    <citation type="journal article" date="2011" name="Physiol. Plantarum">
        <title>An ankyrin repeat protein is involved in anthocyanin biosynthesis in Arabidopsis.</title>
        <authorList>
            <person name="Yoo J."/>
            <person name="Shin D.H."/>
            <person name="Cho M.-H."/>
            <person name="Kim T.-L."/>
            <person name="Bhoo S.H."/>
            <person name="Hahn T.-R."/>
        </authorList>
    </citation>
    <scope>DISRUPTION PHENOTYPE</scope>
    <source>
        <strain>cv. Columbia</strain>
    </source>
</reference>
<keyword id="KW-0040">ANK repeat</keyword>
<keyword id="KW-0963">Cytoplasm</keyword>
<keyword id="KW-0496">Mitochondrion</keyword>
<keyword id="KW-0539">Nucleus</keyword>
<keyword id="KW-1185">Reference proteome</keyword>
<keyword id="KW-0677">Repeat</keyword>
<comment type="subunit">
    <text evidence="1">Interacts with phytochrome A (PHYA), both in Pr and Pfr forms.</text>
</comment>
<comment type="subcellular location">
    <molecule>Phytochrome-interacting ankyrin-repeat protein 1</molecule>
    <subcellularLocation>
        <location evidence="1">Cytoplasm</location>
    </subcellularLocation>
    <subcellularLocation>
        <location evidence="1">Nucleus</location>
    </subcellularLocation>
</comment>
<comment type="subcellular location">
    <molecule>Protein ANK6-like, mitochondrial</molecule>
    <subcellularLocation>
        <location evidence="1">Mitochondrion</location>
    </subcellularLocation>
</comment>
<comment type="disruption phenotype">
    <text evidence="3">Normal hypocotyls length.</text>
</comment>
<comment type="sequence caution" evidence="5">
    <conflict type="erroneous gene model prediction">
        <sequence resource="EMBL-CDS" id="CAB62596"/>
    </conflict>
</comment>
<gene>
    <name evidence="4" type="primary">PIA1</name>
    <name evidence="6" type="ordered locus">At5g07840</name>
    <name evidence="8" type="ORF">F13G24.40</name>
    <name evidence="7" type="ORF">MXM12.8</name>
</gene>